<gene>
    <name type="primary">VCX3B</name>
    <name type="synonym">VCXC</name>
</gene>
<proteinExistence type="evidence at transcript level"/>
<accession>Q9H321</accession>
<accession>C9JS46</accession>
<accession>Q4KN12</accession>
<evidence type="ECO:0000256" key="1">
    <source>
        <dbReference type="SAM" id="MobiDB-lite"/>
    </source>
</evidence>
<evidence type="ECO:0000269" key="2">
    <source>
    </source>
</evidence>
<evidence type="ECO:0000303" key="3">
    <source>
    </source>
</evidence>
<evidence type="ECO:0000303" key="4">
    <source>
    </source>
</evidence>
<evidence type="ECO:0000305" key="5"/>
<name>VCX3B_HUMAN</name>
<organism>
    <name type="scientific">Homo sapiens</name>
    <name type="common">Human</name>
    <dbReference type="NCBI Taxonomy" id="9606"/>
    <lineage>
        <taxon>Eukaryota</taxon>
        <taxon>Metazoa</taxon>
        <taxon>Chordata</taxon>
        <taxon>Craniata</taxon>
        <taxon>Vertebrata</taxon>
        <taxon>Euteleostomi</taxon>
        <taxon>Mammalia</taxon>
        <taxon>Eutheria</taxon>
        <taxon>Euarchontoglires</taxon>
        <taxon>Primates</taxon>
        <taxon>Haplorrhini</taxon>
        <taxon>Catarrhini</taxon>
        <taxon>Hominidae</taxon>
        <taxon>Homo</taxon>
    </lineage>
</organism>
<keyword id="KW-0025">Alternative splicing</keyword>
<keyword id="KW-1185">Reference proteome</keyword>
<keyword id="KW-0677">Repeat</keyword>
<feature type="chain" id="PRO_0000184662" description="Variable charge X-linked protein 3B">
    <location>
        <begin position="1"/>
        <end position="246"/>
    </location>
</feature>
<feature type="repeat" description="1">
    <location>
        <begin position="104"/>
        <end position="113"/>
    </location>
</feature>
<feature type="repeat" description="2">
    <location>
        <begin position="114"/>
        <end position="123"/>
    </location>
</feature>
<feature type="repeat" description="3">
    <location>
        <begin position="124"/>
        <end position="133"/>
    </location>
</feature>
<feature type="repeat" description="4">
    <location>
        <begin position="134"/>
        <end position="143"/>
    </location>
</feature>
<feature type="repeat" description="5">
    <location>
        <begin position="144"/>
        <end position="153"/>
    </location>
</feature>
<feature type="repeat" description="6">
    <location>
        <begin position="154"/>
        <end position="163"/>
    </location>
</feature>
<feature type="repeat" description="7">
    <location>
        <begin position="164"/>
        <end position="173"/>
    </location>
</feature>
<feature type="repeat" description="8">
    <location>
        <begin position="174"/>
        <end position="183"/>
    </location>
</feature>
<feature type="repeat" description="9">
    <location>
        <begin position="184"/>
        <end position="193"/>
    </location>
</feature>
<feature type="repeat" description="10">
    <location>
        <begin position="194"/>
        <end position="203"/>
    </location>
</feature>
<feature type="repeat" description="11">
    <location>
        <begin position="204"/>
        <end position="213"/>
    </location>
</feature>
<feature type="repeat" description="12">
    <location>
        <begin position="214"/>
        <end position="223"/>
    </location>
</feature>
<feature type="repeat" description="13">
    <location>
        <begin position="224"/>
        <end position="233"/>
    </location>
</feature>
<feature type="repeat" description="14">
    <location>
        <begin position="234"/>
        <end position="243"/>
    </location>
</feature>
<feature type="region of interest" description="Disordered" evidence="1">
    <location>
        <begin position="1"/>
        <end position="246"/>
    </location>
</feature>
<feature type="region of interest" description="14 X 10 AA tandem repeats of L-S-Q-E-S-[EQ]-V-E-E-P">
    <location>
        <begin position="104"/>
        <end position="243"/>
    </location>
</feature>
<feature type="compositionally biased region" description="Basic residues" evidence="1">
    <location>
        <begin position="34"/>
        <end position="55"/>
    </location>
</feature>
<feature type="compositionally biased region" description="Low complexity" evidence="1">
    <location>
        <begin position="56"/>
        <end position="84"/>
    </location>
</feature>
<feature type="compositionally biased region" description="Acidic residues" evidence="1">
    <location>
        <begin position="108"/>
        <end position="124"/>
    </location>
</feature>
<feature type="compositionally biased region" description="Low complexity" evidence="1">
    <location>
        <begin position="125"/>
        <end position="137"/>
    </location>
</feature>
<feature type="compositionally biased region" description="Low complexity" evidence="1">
    <location>
        <begin position="145"/>
        <end position="157"/>
    </location>
</feature>
<feature type="compositionally biased region" description="Acidic residues" evidence="1">
    <location>
        <begin position="158"/>
        <end position="174"/>
    </location>
</feature>
<feature type="compositionally biased region" description="Low complexity" evidence="1">
    <location>
        <begin position="175"/>
        <end position="187"/>
    </location>
</feature>
<feature type="compositionally biased region" description="Low complexity" evidence="1">
    <location>
        <begin position="195"/>
        <end position="207"/>
    </location>
</feature>
<feature type="compositionally biased region" description="Low complexity" evidence="1">
    <location>
        <begin position="215"/>
        <end position="227"/>
    </location>
</feature>
<feature type="compositionally biased region" description="Acidic residues" evidence="1">
    <location>
        <begin position="228"/>
        <end position="246"/>
    </location>
</feature>
<feature type="splice variant" id="VSP_054105" description="In isoform 2." evidence="3 4">
    <location>
        <begin position="169"/>
        <end position="198"/>
    </location>
</feature>
<feature type="sequence variant" id="VAR_037644" description="In dbSNP:rs201965035." evidence="2">
    <original>K</original>
    <variation>T</variation>
    <location>
        <position position="15"/>
    </location>
</feature>
<feature type="sequence conflict" description="In Ref. 3; AAH98143." evidence="5" ref="3">
    <original>GTQHD</original>
    <variation>VEE</variation>
    <location>
        <begin position="98"/>
        <end position="102"/>
    </location>
</feature>
<feature type="sequence conflict" description="In Ref. 3; AAH98143." evidence="5" ref="3">
    <original>EL</original>
    <variation>QV</variation>
    <location>
        <begin position="109"/>
        <end position="110"/>
    </location>
</feature>
<feature type="sequence conflict" description="In Ref. 3; AAH98143." evidence="5" ref="3">
    <original>V</original>
    <variation>M</variation>
    <location>
        <position position="120"/>
    </location>
</feature>
<reference key="1">
    <citation type="journal article" date="2005" name="Nature">
        <title>The DNA sequence of the human X chromosome.</title>
        <authorList>
            <person name="Ross M.T."/>
            <person name="Grafham D.V."/>
            <person name="Coffey A.J."/>
            <person name="Scherer S."/>
            <person name="McLay K."/>
            <person name="Muzny D."/>
            <person name="Platzer M."/>
            <person name="Howell G.R."/>
            <person name="Burrows C."/>
            <person name="Bird C.P."/>
            <person name="Frankish A."/>
            <person name="Lovell F.L."/>
            <person name="Howe K.L."/>
            <person name="Ashurst J.L."/>
            <person name="Fulton R.S."/>
            <person name="Sudbrak R."/>
            <person name="Wen G."/>
            <person name="Jones M.C."/>
            <person name="Hurles M.E."/>
            <person name="Andrews T.D."/>
            <person name="Scott C.E."/>
            <person name="Searle S."/>
            <person name="Ramser J."/>
            <person name="Whittaker A."/>
            <person name="Deadman R."/>
            <person name="Carter N.P."/>
            <person name="Hunt S.E."/>
            <person name="Chen R."/>
            <person name="Cree A."/>
            <person name="Gunaratne P."/>
            <person name="Havlak P."/>
            <person name="Hodgson A."/>
            <person name="Metzker M.L."/>
            <person name="Richards S."/>
            <person name="Scott G."/>
            <person name="Steffen D."/>
            <person name="Sodergren E."/>
            <person name="Wheeler D.A."/>
            <person name="Worley K.C."/>
            <person name="Ainscough R."/>
            <person name="Ambrose K.D."/>
            <person name="Ansari-Lari M.A."/>
            <person name="Aradhya S."/>
            <person name="Ashwell R.I."/>
            <person name="Babbage A.K."/>
            <person name="Bagguley C.L."/>
            <person name="Ballabio A."/>
            <person name="Banerjee R."/>
            <person name="Barker G.E."/>
            <person name="Barlow K.F."/>
            <person name="Barrett I.P."/>
            <person name="Bates K.N."/>
            <person name="Beare D.M."/>
            <person name="Beasley H."/>
            <person name="Beasley O."/>
            <person name="Beck A."/>
            <person name="Bethel G."/>
            <person name="Blechschmidt K."/>
            <person name="Brady N."/>
            <person name="Bray-Allen S."/>
            <person name="Bridgeman A.M."/>
            <person name="Brown A.J."/>
            <person name="Brown M.J."/>
            <person name="Bonnin D."/>
            <person name="Bruford E.A."/>
            <person name="Buhay C."/>
            <person name="Burch P."/>
            <person name="Burford D."/>
            <person name="Burgess J."/>
            <person name="Burrill W."/>
            <person name="Burton J."/>
            <person name="Bye J.M."/>
            <person name="Carder C."/>
            <person name="Carrel L."/>
            <person name="Chako J."/>
            <person name="Chapman J.C."/>
            <person name="Chavez D."/>
            <person name="Chen E."/>
            <person name="Chen G."/>
            <person name="Chen Y."/>
            <person name="Chen Z."/>
            <person name="Chinault C."/>
            <person name="Ciccodicola A."/>
            <person name="Clark S.Y."/>
            <person name="Clarke G."/>
            <person name="Clee C.M."/>
            <person name="Clegg S."/>
            <person name="Clerc-Blankenburg K."/>
            <person name="Clifford K."/>
            <person name="Cobley V."/>
            <person name="Cole C.G."/>
            <person name="Conquer J.S."/>
            <person name="Corby N."/>
            <person name="Connor R.E."/>
            <person name="David R."/>
            <person name="Davies J."/>
            <person name="Davis C."/>
            <person name="Davis J."/>
            <person name="Delgado O."/>
            <person name="Deshazo D."/>
            <person name="Dhami P."/>
            <person name="Ding Y."/>
            <person name="Dinh H."/>
            <person name="Dodsworth S."/>
            <person name="Draper H."/>
            <person name="Dugan-Rocha S."/>
            <person name="Dunham A."/>
            <person name="Dunn M."/>
            <person name="Durbin K.J."/>
            <person name="Dutta I."/>
            <person name="Eades T."/>
            <person name="Ellwood M."/>
            <person name="Emery-Cohen A."/>
            <person name="Errington H."/>
            <person name="Evans K.L."/>
            <person name="Faulkner L."/>
            <person name="Francis F."/>
            <person name="Frankland J."/>
            <person name="Fraser A.E."/>
            <person name="Galgoczy P."/>
            <person name="Gilbert J."/>
            <person name="Gill R."/>
            <person name="Gloeckner G."/>
            <person name="Gregory S.G."/>
            <person name="Gribble S."/>
            <person name="Griffiths C."/>
            <person name="Grocock R."/>
            <person name="Gu Y."/>
            <person name="Gwilliam R."/>
            <person name="Hamilton C."/>
            <person name="Hart E.A."/>
            <person name="Hawes A."/>
            <person name="Heath P.D."/>
            <person name="Heitmann K."/>
            <person name="Hennig S."/>
            <person name="Hernandez J."/>
            <person name="Hinzmann B."/>
            <person name="Ho S."/>
            <person name="Hoffs M."/>
            <person name="Howden P.J."/>
            <person name="Huckle E.J."/>
            <person name="Hume J."/>
            <person name="Hunt P.J."/>
            <person name="Hunt A.R."/>
            <person name="Isherwood J."/>
            <person name="Jacob L."/>
            <person name="Johnson D."/>
            <person name="Jones S."/>
            <person name="de Jong P.J."/>
            <person name="Joseph S.S."/>
            <person name="Keenan S."/>
            <person name="Kelly S."/>
            <person name="Kershaw J.K."/>
            <person name="Khan Z."/>
            <person name="Kioschis P."/>
            <person name="Klages S."/>
            <person name="Knights A.J."/>
            <person name="Kosiura A."/>
            <person name="Kovar-Smith C."/>
            <person name="Laird G.K."/>
            <person name="Langford C."/>
            <person name="Lawlor S."/>
            <person name="Leversha M."/>
            <person name="Lewis L."/>
            <person name="Liu W."/>
            <person name="Lloyd C."/>
            <person name="Lloyd D.M."/>
            <person name="Loulseged H."/>
            <person name="Loveland J.E."/>
            <person name="Lovell J.D."/>
            <person name="Lozado R."/>
            <person name="Lu J."/>
            <person name="Lyne R."/>
            <person name="Ma J."/>
            <person name="Maheshwari M."/>
            <person name="Matthews L.H."/>
            <person name="McDowall J."/>
            <person name="McLaren S."/>
            <person name="McMurray A."/>
            <person name="Meidl P."/>
            <person name="Meitinger T."/>
            <person name="Milne S."/>
            <person name="Miner G."/>
            <person name="Mistry S.L."/>
            <person name="Morgan M."/>
            <person name="Morris S."/>
            <person name="Mueller I."/>
            <person name="Mullikin J.C."/>
            <person name="Nguyen N."/>
            <person name="Nordsiek G."/>
            <person name="Nyakatura G."/>
            <person name="O'dell C.N."/>
            <person name="Okwuonu G."/>
            <person name="Palmer S."/>
            <person name="Pandian R."/>
            <person name="Parker D."/>
            <person name="Parrish J."/>
            <person name="Pasternak S."/>
            <person name="Patel D."/>
            <person name="Pearce A.V."/>
            <person name="Pearson D.M."/>
            <person name="Pelan S.E."/>
            <person name="Perez L."/>
            <person name="Porter K.M."/>
            <person name="Ramsey Y."/>
            <person name="Reichwald K."/>
            <person name="Rhodes S."/>
            <person name="Ridler K.A."/>
            <person name="Schlessinger D."/>
            <person name="Schueler M.G."/>
            <person name="Sehra H.K."/>
            <person name="Shaw-Smith C."/>
            <person name="Shen H."/>
            <person name="Sheridan E.M."/>
            <person name="Shownkeen R."/>
            <person name="Skuce C.D."/>
            <person name="Smith M.L."/>
            <person name="Sotheran E.C."/>
            <person name="Steingruber H.E."/>
            <person name="Steward C.A."/>
            <person name="Storey R."/>
            <person name="Swann R.M."/>
            <person name="Swarbreck D."/>
            <person name="Tabor P.E."/>
            <person name="Taudien S."/>
            <person name="Taylor T."/>
            <person name="Teague B."/>
            <person name="Thomas K."/>
            <person name="Thorpe A."/>
            <person name="Timms K."/>
            <person name="Tracey A."/>
            <person name="Trevanion S."/>
            <person name="Tromans A.C."/>
            <person name="d'Urso M."/>
            <person name="Verduzco D."/>
            <person name="Villasana D."/>
            <person name="Waldron L."/>
            <person name="Wall M."/>
            <person name="Wang Q."/>
            <person name="Warren J."/>
            <person name="Warry G.L."/>
            <person name="Wei X."/>
            <person name="West A."/>
            <person name="Whitehead S.L."/>
            <person name="Whiteley M.N."/>
            <person name="Wilkinson J.E."/>
            <person name="Willey D.L."/>
            <person name="Williams G."/>
            <person name="Williams L."/>
            <person name="Williamson A."/>
            <person name="Williamson H."/>
            <person name="Wilming L."/>
            <person name="Woodmansey R.L."/>
            <person name="Wray P.W."/>
            <person name="Yen J."/>
            <person name="Zhang J."/>
            <person name="Zhou J."/>
            <person name="Zoghbi H."/>
            <person name="Zorilla S."/>
            <person name="Buck D."/>
            <person name="Reinhardt R."/>
            <person name="Poustka A."/>
            <person name="Rosenthal A."/>
            <person name="Lehrach H."/>
            <person name="Meindl A."/>
            <person name="Minx P.J."/>
            <person name="Hillier L.W."/>
            <person name="Willard H.F."/>
            <person name="Wilson R.K."/>
            <person name="Waterston R.H."/>
            <person name="Rice C.M."/>
            <person name="Vaudin M."/>
            <person name="Coulson A."/>
            <person name="Nelson D.L."/>
            <person name="Weinstock G."/>
            <person name="Sulston J.E."/>
            <person name="Durbin R.M."/>
            <person name="Hubbard T."/>
            <person name="Gibbs R.A."/>
            <person name="Beck S."/>
            <person name="Rogers J."/>
            <person name="Bentley D.R."/>
        </authorList>
    </citation>
    <scope>NUCLEOTIDE SEQUENCE [LARGE SCALE GENOMIC DNA]</scope>
</reference>
<reference key="2">
    <citation type="journal article" date="2000" name="Am. J. Hum. Genet.">
        <title>A member of a gene family on Xp22.3, VCX-A, is deleted in patients with X-linked nonspecific mental retardation.</title>
        <authorList>
            <person name="Fukami M."/>
            <person name="Kirsch S."/>
            <person name="Schiller S."/>
            <person name="Richter A."/>
            <person name="Benes V."/>
            <person name="Franco B."/>
            <person name="Muroya K."/>
            <person name="Rao E."/>
            <person name="Merker S."/>
            <person name="Niesler B."/>
            <person name="Ballabio A."/>
            <person name="Ansorge W."/>
            <person name="Ogata T."/>
            <person name="Rappold G.A."/>
        </authorList>
    </citation>
    <scope>NUCLEOTIDE SEQUENCE [MRNA] (ISOFORM 2)</scope>
    <scope>VARIANT THR-15</scope>
</reference>
<reference key="3">
    <citation type="journal article" date="2004" name="Genome Res.">
        <title>The status, quality, and expansion of the NIH full-length cDNA project: the Mammalian Gene Collection (MGC).</title>
        <authorList>
            <consortium name="The MGC Project Team"/>
        </authorList>
    </citation>
    <scope>NUCLEOTIDE SEQUENCE [LARGE SCALE MRNA] (ISOFORM 2)</scope>
</reference>
<dbReference type="EMBL" id="AC006062">
    <property type="status" value="NOT_ANNOTATED_CDS"/>
    <property type="molecule type" value="Genomic_DNA"/>
</dbReference>
<dbReference type="EMBL" id="AF167080">
    <property type="protein sequence ID" value="AAG41766.2"/>
    <property type="molecule type" value="mRNA"/>
</dbReference>
<dbReference type="EMBL" id="BC098143">
    <property type="protein sequence ID" value="AAH98143.1"/>
    <property type="molecule type" value="mRNA"/>
</dbReference>
<dbReference type="CCDS" id="CCDS48077.2">
    <molecule id="Q9H321-1"/>
</dbReference>
<dbReference type="RefSeq" id="NP_001001888.3">
    <molecule id="Q9H321-1"/>
    <property type="nucleotide sequence ID" value="NM_001001888.4"/>
</dbReference>
<dbReference type="FunCoup" id="Q9H321">
    <property type="interactions" value="58"/>
</dbReference>
<dbReference type="STRING" id="9606.ENSP00000370420"/>
<dbReference type="iPTMnet" id="Q9H321"/>
<dbReference type="PhosphoSitePlus" id="Q9H321"/>
<dbReference type="BioMuta" id="VCX3B"/>
<dbReference type="DMDM" id="166215027"/>
<dbReference type="MassIVE" id="Q9H321"/>
<dbReference type="PaxDb" id="9606-ENSP00000370420"/>
<dbReference type="PeptideAtlas" id="Q9H321"/>
<dbReference type="ProteomicsDB" id="11441"/>
<dbReference type="ProteomicsDB" id="80654">
    <molecule id="Q9H321-1"/>
</dbReference>
<dbReference type="DNASU" id="425054"/>
<dbReference type="Ensembl" id="ENST00000381032.6">
    <molecule id="Q9H321-1"/>
    <property type="protein sequence ID" value="ENSP00000370420.1"/>
    <property type="gene ID" value="ENSG00000205642.11"/>
</dbReference>
<dbReference type="GeneID" id="425054"/>
<dbReference type="KEGG" id="hsa:425054"/>
<dbReference type="MANE-Select" id="ENST00000381032.6">
    <property type="protein sequence ID" value="ENSP00000370420.1"/>
    <property type="RefSeq nucleotide sequence ID" value="NM_001001888.4"/>
    <property type="RefSeq protein sequence ID" value="NP_001001888.3"/>
</dbReference>
<dbReference type="UCSC" id="uc011mht.3">
    <molecule id="Q9H321-1"/>
    <property type="organism name" value="human"/>
</dbReference>
<dbReference type="AGR" id="HGNC:31838"/>
<dbReference type="CTD" id="425054"/>
<dbReference type="DisGeNET" id="425054"/>
<dbReference type="GeneCards" id="VCX3B"/>
<dbReference type="HGNC" id="HGNC:31838">
    <property type="gene designation" value="VCX3B"/>
</dbReference>
<dbReference type="HPA" id="ENSG00000205642">
    <property type="expression patterns" value="Tissue enriched (testis)"/>
</dbReference>
<dbReference type="neXtProt" id="NX_Q9H321"/>
<dbReference type="OpenTargets" id="ENSG00000205642"/>
<dbReference type="PharmGKB" id="PA134866686"/>
<dbReference type="VEuPathDB" id="HostDB:ENSG00000205642"/>
<dbReference type="eggNOG" id="KOG3216">
    <property type="taxonomic scope" value="Eukaryota"/>
</dbReference>
<dbReference type="GeneTree" id="ENSGT00440000034745"/>
<dbReference type="InParanoid" id="Q9H321"/>
<dbReference type="OMA" id="EFRCEEP"/>
<dbReference type="PAN-GO" id="Q9H321">
    <property type="GO annotations" value="1 GO annotation based on evolutionary models"/>
</dbReference>
<dbReference type="PathwayCommons" id="Q9H321"/>
<dbReference type="BioGRID-ORCS" id="425054">
    <property type="hits" value="12 hits in 304 CRISPR screens"/>
</dbReference>
<dbReference type="GenomeRNAi" id="425054"/>
<dbReference type="Pharos" id="Q9H321">
    <property type="development level" value="Tdark"/>
</dbReference>
<dbReference type="PRO" id="PR:Q9H321"/>
<dbReference type="Proteomes" id="UP000005640">
    <property type="component" value="Chromosome X"/>
</dbReference>
<dbReference type="RNAct" id="Q9H321">
    <property type="molecule type" value="protein"/>
</dbReference>
<dbReference type="Bgee" id="ENSG00000205642">
    <property type="expression patterns" value="Expressed in right testis and 73 other cell types or tissues"/>
</dbReference>
<dbReference type="ExpressionAtlas" id="Q9H321">
    <property type="expression patterns" value="baseline and differential"/>
</dbReference>
<dbReference type="GO" id="GO:0005730">
    <property type="term" value="C:nucleolus"/>
    <property type="evidence" value="ECO:0000250"/>
    <property type="project" value="UniProtKB"/>
</dbReference>
<dbReference type="GO" id="GO:0005634">
    <property type="term" value="C:nucleus"/>
    <property type="evidence" value="ECO:0000250"/>
    <property type="project" value="UniProtKB"/>
</dbReference>
<dbReference type="GO" id="GO:0007420">
    <property type="term" value="P:brain development"/>
    <property type="evidence" value="ECO:0000318"/>
    <property type="project" value="GO_Central"/>
</dbReference>
<dbReference type="InterPro" id="IPR026653">
    <property type="entry name" value="VCX/VCY1"/>
</dbReference>
<dbReference type="PANTHER" id="PTHR15251">
    <property type="entry name" value="TESTIS-SPECIFIC BASIC PROTEIN Y 1-RELATED"/>
    <property type="match status" value="1"/>
</dbReference>
<dbReference type="PANTHER" id="PTHR15251:SF2">
    <property type="entry name" value="TESTIS-SPECIFIC BASIC PROTEIN Y 1-RELATED"/>
    <property type="match status" value="1"/>
</dbReference>
<dbReference type="Pfam" id="PF15231">
    <property type="entry name" value="VCX_VCY"/>
    <property type="match status" value="1"/>
</dbReference>
<comment type="function">
    <text>May mediate a process in spermatogenesis or may play a role in sex ratio distortion.</text>
</comment>
<comment type="alternative products">
    <event type="alternative splicing"/>
    <isoform>
        <id>Q9H321-1</id>
        <name>1</name>
        <sequence type="displayed"/>
    </isoform>
    <isoform>
        <id>Q9H321-2</id>
        <name>2</name>
        <sequence type="described" ref="VSP_054105"/>
    </isoform>
</comment>
<comment type="tissue specificity">
    <text>Expressed exclusively in testis.</text>
</comment>
<comment type="similarity">
    <text evidence="5">Belongs to the VCX/VCY family.</text>
</comment>
<protein>
    <recommendedName>
        <fullName>Variable charge X-linked protein 3B</fullName>
    </recommendedName>
    <alternativeName>
        <fullName>Variably charged protein X-C</fullName>
        <shortName>VCX-C</shortName>
    </alternativeName>
</protein>
<sequence length="246" mass="26878">MSPKPRASGPPAKAKEAGKRKSSSQPSPSDPKKKTTKVAKKGKAVRRGRRGKKGAATKMAAVTAPEAESGPAAPGPSDQPSQELPQHELPPEEPVSEGTQHDPLSQESELEEPLSQESEVEEPLSQESQVEEPLSQESEVEEPLSQESQVEEPLSQESEVEEPLSQESEVEEPLSQESQVEEPLSQESEVEEPLSQESQVEEPLSQESEMEEPLSQESQVEEPLSQESEMEEPLSQESEMEELPSV</sequence>